<evidence type="ECO:0000255" key="1">
    <source>
        <dbReference type="HAMAP-Rule" id="MF_04037"/>
    </source>
</evidence>
<organism>
    <name type="scientific">Human herpesvirus 6B (strain Z29)</name>
    <name type="common">HHV-6 variant B</name>
    <name type="synonym">Human B lymphotropic virus</name>
    <dbReference type="NCBI Taxonomy" id="36351"/>
    <lineage>
        <taxon>Viruses</taxon>
        <taxon>Duplodnaviria</taxon>
        <taxon>Heunggongvirae</taxon>
        <taxon>Peploviricota</taxon>
        <taxon>Herviviricetes</taxon>
        <taxon>Herpesvirales</taxon>
        <taxon>Orthoherpesviridae</taxon>
        <taxon>Betaherpesvirinae</taxon>
        <taxon>Roseolovirus</taxon>
        <taxon>Roseolovirus humanbeta6b</taxon>
        <taxon>Human herpesvirus 6B</taxon>
    </lineage>
</organism>
<sequence>MSCKKGARQRLYVSLWLFYILVFAAATEMDFYSSECHSHTYEIVLNSFSSIWLLINLFLLLCSFAIFLKYWCYKTFASETVKGY</sequence>
<accession>P52547</accession>
<gene>
    <name evidence="1" type="primary">gN</name>
    <name type="ORF">KA7R</name>
    <name type="ORF">U46</name>
</gene>
<feature type="signal peptide" evidence="1">
    <location>
        <begin position="1"/>
        <end position="26"/>
    </location>
</feature>
<feature type="chain" id="PRO_0000116216" description="Envelope glycoprotein N" evidence="1">
    <location>
        <begin position="27"/>
        <end position="84"/>
    </location>
</feature>
<feature type="topological domain" description="Virion surface" evidence="1">
    <location>
        <begin position="27"/>
        <end position="45"/>
    </location>
</feature>
<feature type="transmembrane region" description="Helical" evidence="1">
    <location>
        <begin position="46"/>
        <end position="66"/>
    </location>
</feature>
<feature type="topological domain" description="Intravirion" evidence="1">
    <location>
        <begin position="67"/>
        <end position="84"/>
    </location>
</feature>
<feature type="disulfide bond" description="Interchain (with gM)" evidence="1">
    <location>
        <position position="36"/>
    </location>
</feature>
<reference key="1">
    <citation type="journal article" date="1995" name="J. Virol.">
        <title>Intragenomic linear amplification of human herpesvirus 6B oriLyt suggests acquisition of oriLyt by transposition.</title>
        <authorList>
            <person name="Stamey F.R."/>
            <person name="Dominguez G."/>
            <person name="Black J.B."/>
            <person name="Dambaugh T.R."/>
            <person name="Pellett P.E."/>
        </authorList>
    </citation>
    <scope>NUCLEOTIDE SEQUENCE [GENOMIC DNA]</scope>
</reference>
<reference key="2">
    <citation type="journal article" date="1999" name="J. Virol.">
        <title>Human herpesvirus 6B genome sequence: coding content and comparison with human herpesvirus 6A.</title>
        <authorList>
            <person name="Dominguez G."/>
            <person name="Dambaugh T.R."/>
            <person name="Stamey F.R."/>
            <person name="Dewhurst S."/>
            <person name="Inoue N."/>
            <person name="Pellett P.E."/>
        </authorList>
    </citation>
    <scope>NUCLEOTIDE SEQUENCE [LARGE SCALE GENOMIC DNA]</scope>
</reference>
<keyword id="KW-1015">Disulfide bond</keyword>
<keyword id="KW-1040">Host Golgi apparatus</keyword>
<keyword id="KW-1043">Host membrane</keyword>
<keyword id="KW-0472">Membrane</keyword>
<keyword id="KW-1185">Reference proteome</keyword>
<keyword id="KW-0732">Signal</keyword>
<keyword id="KW-0812">Transmembrane</keyword>
<keyword id="KW-1133">Transmembrane helix</keyword>
<keyword id="KW-0261">Viral envelope protein</keyword>
<keyword id="KW-0946">Virion</keyword>
<comment type="function">
    <text evidence="1">Envelope glycoprotein necessary for proper maturation of gM and modulation of its membrane fusion activity. Also plays a critical role in virion morphogenesis.</text>
</comment>
<comment type="subunit">
    <text evidence="1">Interacts (via N-terminus) with gM (via N-terminus). The gM-gN heterodimer forms the gCII complex.</text>
</comment>
<comment type="subcellular location">
    <subcellularLocation>
        <location evidence="1">Virion membrane</location>
        <topology evidence="1">Single-pass type I membrane protein</topology>
    </subcellularLocation>
    <subcellularLocation>
        <location evidence="1">Host membrane</location>
        <topology evidence="1">Single-pass type I membrane protein</topology>
    </subcellularLocation>
    <subcellularLocation>
        <location evidence="1">Host Golgi apparatus</location>
        <location evidence="1">Host trans-Golgi network</location>
    </subcellularLocation>
    <text evidence="1">When coexpressed with gM, localizes in the host trans-Golgi network.</text>
</comment>
<comment type="similarity">
    <text evidence="1">Belongs to the herpesviridae glycoprotein N family.</text>
</comment>
<organismHost>
    <name type="scientific">Homo sapiens</name>
    <name type="common">Human</name>
    <dbReference type="NCBI Taxonomy" id="9606"/>
</organismHost>
<name>GN_HHV6Z</name>
<proteinExistence type="inferred from homology"/>
<protein>
    <recommendedName>
        <fullName evidence="1">Envelope glycoprotein N</fullName>
    </recommendedName>
</protein>
<dbReference type="EMBL" id="AF157706">
    <property type="protein sequence ID" value="AAB06344.1"/>
    <property type="molecule type" value="Genomic_DNA"/>
</dbReference>
<dbReference type="PIR" id="T44006">
    <property type="entry name" value="T44006"/>
</dbReference>
<dbReference type="RefSeq" id="NP_050227.1">
    <property type="nucleotide sequence ID" value="NC_000898.1"/>
</dbReference>
<dbReference type="SMR" id="P52547"/>
<dbReference type="DNASU" id="1497048"/>
<dbReference type="GeneID" id="1497048"/>
<dbReference type="KEGG" id="vg:1497048"/>
<dbReference type="Proteomes" id="UP000006930">
    <property type="component" value="Segment"/>
</dbReference>
<dbReference type="GO" id="GO:0044177">
    <property type="term" value="C:host cell Golgi apparatus"/>
    <property type="evidence" value="ECO:0007669"/>
    <property type="project" value="UniProtKB-SubCell"/>
</dbReference>
<dbReference type="GO" id="GO:0033644">
    <property type="term" value="C:host cell membrane"/>
    <property type="evidence" value="ECO:0007669"/>
    <property type="project" value="UniProtKB-SubCell"/>
</dbReference>
<dbReference type="GO" id="GO:0016020">
    <property type="term" value="C:membrane"/>
    <property type="evidence" value="ECO:0007669"/>
    <property type="project" value="UniProtKB-KW"/>
</dbReference>
<dbReference type="GO" id="GO:0019031">
    <property type="term" value="C:viral envelope"/>
    <property type="evidence" value="ECO:0007669"/>
    <property type="project" value="UniProtKB-KW"/>
</dbReference>
<dbReference type="GO" id="GO:0055036">
    <property type="term" value="C:virion membrane"/>
    <property type="evidence" value="ECO:0007669"/>
    <property type="project" value="UniProtKB-SubCell"/>
</dbReference>
<dbReference type="HAMAP" id="MF_04037">
    <property type="entry name" value="HSV_GN"/>
    <property type="match status" value="1"/>
</dbReference>
<dbReference type="InterPro" id="IPR005211">
    <property type="entry name" value="Herpes_glycoprotein_N_domain"/>
</dbReference>
<dbReference type="InterPro" id="IPR034707">
    <property type="entry name" value="HSV_GN"/>
</dbReference>
<dbReference type="Pfam" id="PF03554">
    <property type="entry name" value="Herpes_UL73"/>
    <property type="match status" value="1"/>
</dbReference>